<organism>
    <name type="scientific">Schizosaccharomyces pombe (strain 972 / ATCC 24843)</name>
    <name type="common">Fission yeast</name>
    <dbReference type="NCBI Taxonomy" id="284812"/>
    <lineage>
        <taxon>Eukaryota</taxon>
        <taxon>Fungi</taxon>
        <taxon>Dikarya</taxon>
        <taxon>Ascomycota</taxon>
        <taxon>Taphrinomycotina</taxon>
        <taxon>Schizosaccharomycetes</taxon>
        <taxon>Schizosaccharomycetales</taxon>
        <taxon>Schizosaccharomycetaceae</taxon>
        <taxon>Schizosaccharomyces</taxon>
    </lineage>
</organism>
<name>ALLC_SCHPO</name>
<comment type="function">
    <text>Utilization of purines as secondary nitrogen sources, when primary sources are limiting.</text>
</comment>
<comment type="catalytic activity">
    <reaction>
        <text>allantoate + H2O = (S)-ureidoglycolate + urea</text>
        <dbReference type="Rhea" id="RHEA:11016"/>
        <dbReference type="ChEBI" id="CHEBI:15377"/>
        <dbReference type="ChEBI" id="CHEBI:16199"/>
        <dbReference type="ChEBI" id="CHEBI:17536"/>
        <dbReference type="ChEBI" id="CHEBI:57296"/>
        <dbReference type="EC" id="3.5.3.4"/>
    </reaction>
</comment>
<comment type="pathway">
    <text>Nitrogen metabolism; (S)-allantoin degradation; (S)-ureidoglycolate from allantoate (aminidohydrolase route): step 1/1.</text>
</comment>
<comment type="similarity">
    <text evidence="1">Belongs to the allantoicase family.</text>
</comment>
<protein>
    <recommendedName>
        <fullName>Probable allantoicase</fullName>
        <ecNumber>3.5.3.4</ecNumber>
    </recommendedName>
    <alternativeName>
        <fullName>Allantoate amidinohydrolase</fullName>
    </alternativeName>
</protein>
<keyword id="KW-0378">Hydrolase</keyword>
<keyword id="KW-0659">Purine metabolism</keyword>
<keyword id="KW-1185">Reference proteome</keyword>
<evidence type="ECO:0000305" key="1"/>
<dbReference type="EC" id="3.5.3.4"/>
<dbReference type="EMBL" id="CU329670">
    <property type="protein sequence ID" value="CAA91956.1"/>
    <property type="molecule type" value="Genomic_DNA"/>
</dbReference>
<dbReference type="PIR" id="S62581">
    <property type="entry name" value="S62581"/>
</dbReference>
<dbReference type="SMR" id="Q09913"/>
<dbReference type="BioGRID" id="277946">
    <property type="interactions" value="6"/>
</dbReference>
<dbReference type="FunCoup" id="Q09913">
    <property type="interactions" value="46"/>
</dbReference>
<dbReference type="STRING" id="284812.Q09913"/>
<dbReference type="PaxDb" id="4896-SPAC1F7.09c.1"/>
<dbReference type="EnsemblFungi" id="SPAC1F7.09c.1">
    <property type="protein sequence ID" value="SPAC1F7.09c.1:pep"/>
    <property type="gene ID" value="SPAC1F7.09c"/>
</dbReference>
<dbReference type="KEGG" id="spo:2541441"/>
<dbReference type="PomBase" id="SPAC1F7.09c"/>
<dbReference type="VEuPathDB" id="FungiDB:SPAC1F7.09c"/>
<dbReference type="eggNOG" id="KOG4145">
    <property type="taxonomic scope" value="Eukaryota"/>
</dbReference>
<dbReference type="HOGENOM" id="CLU_038797_0_0_1"/>
<dbReference type="InParanoid" id="Q09913"/>
<dbReference type="OMA" id="MDDGWET"/>
<dbReference type="PhylomeDB" id="Q09913"/>
<dbReference type="UniPathway" id="UPA00395">
    <property type="reaction ID" value="UER00654"/>
</dbReference>
<dbReference type="PRO" id="PR:Q09913"/>
<dbReference type="Proteomes" id="UP000002485">
    <property type="component" value="Chromosome I"/>
</dbReference>
<dbReference type="GO" id="GO:0005829">
    <property type="term" value="C:cytosol"/>
    <property type="evidence" value="ECO:0007005"/>
    <property type="project" value="PomBase"/>
</dbReference>
<dbReference type="GO" id="GO:0005634">
    <property type="term" value="C:nucleus"/>
    <property type="evidence" value="ECO:0007005"/>
    <property type="project" value="PomBase"/>
</dbReference>
<dbReference type="GO" id="GO:0004037">
    <property type="term" value="F:allantoicase activity"/>
    <property type="evidence" value="ECO:0000269"/>
    <property type="project" value="PomBase"/>
</dbReference>
<dbReference type="GO" id="GO:0000256">
    <property type="term" value="P:allantoin catabolic process"/>
    <property type="evidence" value="ECO:0000318"/>
    <property type="project" value="GO_Central"/>
</dbReference>
<dbReference type="GO" id="GO:0006144">
    <property type="term" value="P:purine nucleobase metabolic process"/>
    <property type="evidence" value="ECO:0007669"/>
    <property type="project" value="UniProtKB-KW"/>
</dbReference>
<dbReference type="GO" id="GO:0000050">
    <property type="term" value="P:urea cycle"/>
    <property type="evidence" value="ECO:0000305"/>
    <property type="project" value="PomBase"/>
</dbReference>
<dbReference type="FunFam" id="2.60.120.260:FF:000078">
    <property type="entry name" value="DAL2p Allantoicase"/>
    <property type="match status" value="1"/>
</dbReference>
<dbReference type="FunFam" id="2.60.120.260:FF:000059">
    <property type="entry name" value="Probable allantoicase"/>
    <property type="match status" value="1"/>
</dbReference>
<dbReference type="Gene3D" id="2.60.120.260">
    <property type="entry name" value="Galactose-binding domain-like"/>
    <property type="match status" value="2"/>
</dbReference>
<dbReference type="HAMAP" id="MF_00813">
    <property type="entry name" value="Allantoicase"/>
    <property type="match status" value="1"/>
</dbReference>
<dbReference type="InterPro" id="IPR005164">
    <property type="entry name" value="Allantoicase"/>
</dbReference>
<dbReference type="InterPro" id="IPR015908">
    <property type="entry name" value="Allantoicase_dom"/>
</dbReference>
<dbReference type="InterPro" id="IPR008979">
    <property type="entry name" value="Galactose-bd-like_sf"/>
</dbReference>
<dbReference type="NCBIfam" id="TIGR02961">
    <property type="entry name" value="allantoicase"/>
    <property type="match status" value="1"/>
</dbReference>
<dbReference type="PANTHER" id="PTHR12045">
    <property type="entry name" value="ALLANTOICASE"/>
    <property type="match status" value="1"/>
</dbReference>
<dbReference type="PANTHER" id="PTHR12045:SF3">
    <property type="entry name" value="INACTIVE ALLANTOICASE-RELATED"/>
    <property type="match status" value="1"/>
</dbReference>
<dbReference type="Pfam" id="PF03561">
    <property type="entry name" value="Allantoicase"/>
    <property type="match status" value="2"/>
</dbReference>
<dbReference type="PIRSF" id="PIRSF016516">
    <property type="entry name" value="Allantoicase"/>
    <property type="match status" value="1"/>
</dbReference>
<dbReference type="SUPFAM" id="SSF49785">
    <property type="entry name" value="Galactose-binding domain-like"/>
    <property type="match status" value="2"/>
</dbReference>
<sequence length="342" mass="37965">MSVENVERLSPEQADAFFGQSSVDLISRALGGQVLGCSDDFFASCENLINPADPIRKAGVFVETGAWYDGWETRRHNTAPCDWVIVKLGPSSGRVTGCEIDTTFFNGNHAPEVSVEAAFLPEGNPDAKTNWTPILPKLPCGPTQRHIYRFKEIPQQNFTHVRLCMYPDGGIARFRLYGNVVPVFPADLDARLDLAHMYLGGLVVQCSDQHFGKKDNLLLPGRGVNMGDGWETARSREKGHVDWVIVKLGARGYIDDALIDTNHFKGNYPKEVILEAIDSPDHIPGPDAQWVTILPARKLGPHMEHVFTNLQNNSTPMTHVRMIIIPDGGVKRLRIYGRRAAN</sequence>
<feature type="chain" id="PRO_0000205913" description="Probable allantoicase">
    <location>
        <begin position="1"/>
        <end position="342"/>
    </location>
</feature>
<proteinExistence type="inferred from homology"/>
<gene>
    <name type="ORF">SPAC1F7.09c</name>
</gene>
<accession>Q09913</accession>
<reference key="1">
    <citation type="journal article" date="2002" name="Nature">
        <title>The genome sequence of Schizosaccharomyces pombe.</title>
        <authorList>
            <person name="Wood V."/>
            <person name="Gwilliam R."/>
            <person name="Rajandream M.A."/>
            <person name="Lyne M.H."/>
            <person name="Lyne R."/>
            <person name="Stewart A."/>
            <person name="Sgouros J.G."/>
            <person name="Peat N."/>
            <person name="Hayles J."/>
            <person name="Baker S.G."/>
            <person name="Basham D."/>
            <person name="Bowman S."/>
            <person name="Brooks K."/>
            <person name="Brown D."/>
            <person name="Brown S."/>
            <person name="Chillingworth T."/>
            <person name="Churcher C.M."/>
            <person name="Collins M."/>
            <person name="Connor R."/>
            <person name="Cronin A."/>
            <person name="Davis P."/>
            <person name="Feltwell T."/>
            <person name="Fraser A."/>
            <person name="Gentles S."/>
            <person name="Goble A."/>
            <person name="Hamlin N."/>
            <person name="Harris D.E."/>
            <person name="Hidalgo J."/>
            <person name="Hodgson G."/>
            <person name="Holroyd S."/>
            <person name="Hornsby T."/>
            <person name="Howarth S."/>
            <person name="Huckle E.J."/>
            <person name="Hunt S."/>
            <person name="Jagels K."/>
            <person name="James K.D."/>
            <person name="Jones L."/>
            <person name="Jones M."/>
            <person name="Leather S."/>
            <person name="McDonald S."/>
            <person name="McLean J."/>
            <person name="Mooney P."/>
            <person name="Moule S."/>
            <person name="Mungall K.L."/>
            <person name="Murphy L.D."/>
            <person name="Niblett D."/>
            <person name="Odell C."/>
            <person name="Oliver K."/>
            <person name="O'Neil S."/>
            <person name="Pearson D."/>
            <person name="Quail M.A."/>
            <person name="Rabbinowitsch E."/>
            <person name="Rutherford K.M."/>
            <person name="Rutter S."/>
            <person name="Saunders D."/>
            <person name="Seeger K."/>
            <person name="Sharp S."/>
            <person name="Skelton J."/>
            <person name="Simmonds M.N."/>
            <person name="Squares R."/>
            <person name="Squares S."/>
            <person name="Stevens K."/>
            <person name="Taylor K."/>
            <person name="Taylor R.G."/>
            <person name="Tivey A."/>
            <person name="Walsh S.V."/>
            <person name="Warren T."/>
            <person name="Whitehead S."/>
            <person name="Woodward J.R."/>
            <person name="Volckaert G."/>
            <person name="Aert R."/>
            <person name="Robben J."/>
            <person name="Grymonprez B."/>
            <person name="Weltjens I."/>
            <person name="Vanstreels E."/>
            <person name="Rieger M."/>
            <person name="Schaefer M."/>
            <person name="Mueller-Auer S."/>
            <person name="Gabel C."/>
            <person name="Fuchs M."/>
            <person name="Duesterhoeft A."/>
            <person name="Fritzc C."/>
            <person name="Holzer E."/>
            <person name="Moestl D."/>
            <person name="Hilbert H."/>
            <person name="Borzym K."/>
            <person name="Langer I."/>
            <person name="Beck A."/>
            <person name="Lehrach H."/>
            <person name="Reinhardt R."/>
            <person name="Pohl T.M."/>
            <person name="Eger P."/>
            <person name="Zimmermann W."/>
            <person name="Wedler H."/>
            <person name="Wambutt R."/>
            <person name="Purnelle B."/>
            <person name="Goffeau A."/>
            <person name="Cadieu E."/>
            <person name="Dreano S."/>
            <person name="Gloux S."/>
            <person name="Lelaure V."/>
            <person name="Mottier S."/>
            <person name="Galibert F."/>
            <person name="Aves S.J."/>
            <person name="Xiang Z."/>
            <person name="Hunt C."/>
            <person name="Moore K."/>
            <person name="Hurst S.M."/>
            <person name="Lucas M."/>
            <person name="Rochet M."/>
            <person name="Gaillardin C."/>
            <person name="Tallada V.A."/>
            <person name="Garzon A."/>
            <person name="Thode G."/>
            <person name="Daga R.R."/>
            <person name="Cruzado L."/>
            <person name="Jimenez J."/>
            <person name="Sanchez M."/>
            <person name="del Rey F."/>
            <person name="Benito J."/>
            <person name="Dominguez A."/>
            <person name="Revuelta J.L."/>
            <person name="Moreno S."/>
            <person name="Armstrong J."/>
            <person name="Forsburg S.L."/>
            <person name="Cerutti L."/>
            <person name="Lowe T."/>
            <person name="McCombie W.R."/>
            <person name="Paulsen I."/>
            <person name="Potashkin J."/>
            <person name="Shpakovski G.V."/>
            <person name="Ussery D."/>
            <person name="Barrell B.G."/>
            <person name="Nurse P."/>
        </authorList>
    </citation>
    <scope>NUCLEOTIDE SEQUENCE [LARGE SCALE GENOMIC DNA]</scope>
    <source>
        <strain>972 / ATCC 24843</strain>
    </source>
</reference>